<keyword id="KW-0408">Iron</keyword>
<keyword id="KW-0479">Metal-binding</keyword>
<keyword id="KW-0503">Monooxygenase</keyword>
<keyword id="KW-0560">Oxidoreductase</keyword>
<keyword id="KW-0597">Phosphoprotein</keyword>
<keyword id="KW-1185">Reference proteome</keyword>
<keyword id="KW-0724">Serotonin biosynthesis</keyword>
<keyword id="KW-0832">Ubl conjugation</keyword>
<sequence length="444" mass="51118">MIEDNKENKDHSLERGRATLIFSLKNEVGGLIKALKIFQEKHVNLLHIESRKSKRRNSEFEIFVDCDTNREQLNDIFHLLKSHTNVLSVTPPDNFTMKEEGMESVPWFPKKISDLDHCANRVLMYGSELDADHPGFKDNVYRKRRKYFADLAMSYKYGDPIPKVEFTEEEIKTWGTVFRELNKLYPTHACREYLKNLPLLSKYCGYREDNIPQLEDISNFLKERTGFSIRPVAGYLSPRDFLSGLAFRVFHCTQYVRHSSDPFYTPEPDTCHELLGHVPLLAEPSFAQFSQEIGLASLGASEEAVQKLATCYFFTVEFGLCKQDGQLRVFGAGLLSSISELKHVLSGHAKVKPFDPKITYKQECLITTFQDVYFVSESFEDAKEKMREFTKTIKRPFGVKYNPYTRSIQILKDAKSITNAMNELRHDLDVVSDALGKVSRQLSV</sequence>
<protein>
    <recommendedName>
        <fullName>Tryptophan 5-hydroxylase 1</fullName>
        <ecNumber evidence="2">1.14.16.4</ecNumber>
    </recommendedName>
    <alternativeName>
        <fullName>Tryptophan 5-monooxygenase 1</fullName>
    </alternativeName>
</protein>
<reference key="1">
    <citation type="journal article" date="1987" name="Proc. Natl. Acad. Sci. U.S.A.">
        <title>Full-length cDNA for rabbit tryptophan hydroxylase: functional domains and evolution of aromatic amino acid hydroxylases.</title>
        <authorList>
            <person name="Grenett H.E."/>
            <person name="Ledley F.D."/>
            <person name="Reed L.L."/>
            <person name="Woo S.L.C."/>
        </authorList>
    </citation>
    <scope>NUCLEOTIDE SEQUENCE [MRNA]</scope>
</reference>
<reference key="2">
    <citation type="journal article" date="1994" name="Arch. Biochem. Biophys.">
        <title>Cloning and expression of rabbit and human brain tryptophan hydroxylase cDNA in Escherichia coli.</title>
        <authorList>
            <person name="Tipper J.P."/>
            <person name="Citron B.A."/>
            <person name="Ribeiro P."/>
            <person name="Kaufman S."/>
        </authorList>
    </citation>
    <scope>NUCLEOTIDE SEQUENCE [MRNA]</scope>
    <source>
        <tissue>Brain</tissue>
    </source>
</reference>
<reference key="3">
    <citation type="journal article" date="1999" name="J. Mol. Neurosci.">
        <title>Identification of amino-terminal sequences contributing to tryptophan hydroxylase tetramer formation.</title>
        <authorList>
            <person name="Yohrling G.J. IV"/>
            <person name="Mockus S.M."/>
            <person name="Vrana K.E."/>
        </authorList>
    </citation>
    <scope>SUBUNIT</scope>
</reference>
<organism>
    <name type="scientific">Oryctolagus cuniculus</name>
    <name type="common">Rabbit</name>
    <dbReference type="NCBI Taxonomy" id="9986"/>
    <lineage>
        <taxon>Eukaryota</taxon>
        <taxon>Metazoa</taxon>
        <taxon>Chordata</taxon>
        <taxon>Craniata</taxon>
        <taxon>Vertebrata</taxon>
        <taxon>Euteleostomi</taxon>
        <taxon>Mammalia</taxon>
        <taxon>Eutheria</taxon>
        <taxon>Euarchontoglires</taxon>
        <taxon>Glires</taxon>
        <taxon>Lagomorpha</taxon>
        <taxon>Leporidae</taxon>
        <taxon>Oryctolagus</taxon>
    </lineage>
</organism>
<evidence type="ECO:0000250" key="1">
    <source>
        <dbReference type="UniProtKB" id="P09810"/>
    </source>
</evidence>
<evidence type="ECO:0000250" key="2">
    <source>
        <dbReference type="UniProtKB" id="P17532"/>
    </source>
</evidence>
<evidence type="ECO:0000250" key="3">
    <source>
        <dbReference type="UniProtKB" id="P17752"/>
    </source>
</evidence>
<evidence type="ECO:0000250" key="4">
    <source>
        <dbReference type="UniProtKB" id="P70080"/>
    </source>
</evidence>
<evidence type="ECO:0000255" key="5"/>
<evidence type="ECO:0000255" key="6">
    <source>
        <dbReference type="PROSITE-ProRule" id="PRU01007"/>
    </source>
</evidence>
<evidence type="ECO:0000269" key="7">
    <source>
    </source>
</evidence>
<evidence type="ECO:0000305" key="8"/>
<proteinExistence type="evidence at protein level"/>
<feature type="chain" id="PRO_0000205570" description="Tryptophan 5-hydroxylase 1">
    <location>
        <begin position="1"/>
        <end position="444"/>
    </location>
</feature>
<feature type="domain" description="ACT" evidence="6">
    <location>
        <begin position="19"/>
        <end position="94"/>
    </location>
</feature>
<feature type="binding site" evidence="4">
    <location>
        <position position="235"/>
    </location>
    <ligand>
        <name>L-tryptophan</name>
        <dbReference type="ChEBI" id="CHEBI:57912"/>
    </ligand>
</feature>
<feature type="binding site" evidence="4">
    <location>
        <position position="257"/>
    </location>
    <ligand>
        <name>L-tryptophan</name>
        <dbReference type="ChEBI" id="CHEBI:57912"/>
    </ligand>
</feature>
<feature type="binding site" evidence="4">
    <location>
        <position position="265"/>
    </location>
    <ligand>
        <name>L-tryptophan</name>
        <dbReference type="ChEBI" id="CHEBI:57912"/>
    </ligand>
</feature>
<feature type="binding site" evidence="4">
    <location>
        <position position="272"/>
    </location>
    <ligand>
        <name>Fe cation</name>
        <dbReference type="ChEBI" id="CHEBI:24875"/>
    </ligand>
</feature>
<feature type="binding site" evidence="4">
    <location>
        <position position="277"/>
    </location>
    <ligand>
        <name>Fe cation</name>
        <dbReference type="ChEBI" id="CHEBI:24875"/>
    </ligand>
</feature>
<feature type="binding site" evidence="4">
    <location>
        <position position="317"/>
    </location>
    <ligand>
        <name>Fe cation</name>
        <dbReference type="ChEBI" id="CHEBI:24875"/>
    </ligand>
</feature>
<feature type="binding site" evidence="4">
    <location>
        <position position="336"/>
    </location>
    <ligand>
        <name>L-tryptophan</name>
        <dbReference type="ChEBI" id="CHEBI:57912"/>
    </ligand>
</feature>
<feature type="binding site" evidence="4">
    <location>
        <position position="366"/>
    </location>
    <ligand>
        <name>L-tryptophan</name>
        <dbReference type="ChEBI" id="CHEBI:57912"/>
    </ligand>
</feature>
<feature type="modified residue" description="Phosphoserine; by PKA" evidence="5">
    <location>
        <position position="58"/>
    </location>
</feature>
<feature type="sequence conflict" description="In Ref. 1; AAA31487." evidence="8" ref="1">
    <original>M</original>
    <variation>L</variation>
    <location>
        <position position="102"/>
    </location>
</feature>
<feature type="sequence conflict" description="In Ref. 2; AAA67051." evidence="8" ref="2">
    <original>L</original>
    <variation>S</variation>
    <location>
        <position position="151"/>
    </location>
</feature>
<feature type="sequence conflict" description="In Ref. 1; AAA31487." evidence="8" ref="1">
    <original>KY</original>
    <variation>ND</variation>
    <location>
        <begin position="202"/>
        <end position="203"/>
    </location>
</feature>
<feature type="sequence conflict" description="In Ref. 2; AAA67051." evidence="8" ref="2">
    <original>R</original>
    <variation>Q</variation>
    <location>
        <position position="207"/>
    </location>
</feature>
<feature type="sequence conflict" description="In Ref. 1; AAA31487." evidence="8" ref="1">
    <original>T</original>
    <variation>K</variation>
    <location>
        <position position="390"/>
    </location>
</feature>
<comment type="function">
    <text evidence="2">Oxidizes L-tryptophan to 5-hydroxy-l-tryptophan in the rate-determining step of serotonin biosynthesis.</text>
</comment>
<comment type="catalytic activity">
    <reaction evidence="2">
        <text>(6R)-L-erythro-5,6,7,8-tetrahydrobiopterin + L-tryptophan + O2 = 5-hydroxy-L-tryptophan + (4aS,6R)-4a-hydroxy-L-erythro-5,6,7,8-tetrahydrobiopterin</text>
        <dbReference type="Rhea" id="RHEA:16709"/>
        <dbReference type="ChEBI" id="CHEBI:15379"/>
        <dbReference type="ChEBI" id="CHEBI:15642"/>
        <dbReference type="ChEBI" id="CHEBI:57912"/>
        <dbReference type="ChEBI" id="CHEBI:58266"/>
        <dbReference type="ChEBI" id="CHEBI:59560"/>
        <dbReference type="EC" id="1.14.16.4"/>
    </reaction>
</comment>
<comment type="cofactor">
    <cofactor evidence="3">
        <name>Fe(2+)</name>
        <dbReference type="ChEBI" id="CHEBI:29033"/>
    </cofactor>
</comment>
<comment type="pathway">
    <text evidence="2">Aromatic compound metabolism; serotonin biosynthesis; serotonin from L-tryptophan: step 1/2.</text>
</comment>
<comment type="subunit">
    <text evidence="2 7">Homotetramer (PubMed:10636468). Interacts with DNAJC12 (By similarity).</text>
</comment>
<comment type="PTM">
    <text evidence="1">Ubiquitinated, leading to its degradation by the proteasome. Ubiquitinated is triggered by phosphorylation.</text>
</comment>
<comment type="PTM">
    <text evidence="1">Phosphorylated; triggering degradation by the proteasome.</text>
</comment>
<comment type="similarity">
    <text evidence="8">Belongs to the biopterin-dependent aromatic amino acid hydroxylase family.</text>
</comment>
<dbReference type="EC" id="1.14.16.4" evidence="2"/>
<dbReference type="EMBL" id="M17250">
    <property type="protein sequence ID" value="AAA31487.1"/>
    <property type="molecule type" value="mRNA"/>
</dbReference>
<dbReference type="EMBL" id="L29305">
    <property type="protein sequence ID" value="AAA67051.1"/>
    <property type="molecule type" value="mRNA"/>
</dbReference>
<dbReference type="PIR" id="S51199">
    <property type="entry name" value="S51199"/>
</dbReference>
<dbReference type="RefSeq" id="NP_001075741.1">
    <property type="nucleotide sequence ID" value="NM_001082272.1"/>
</dbReference>
<dbReference type="RefSeq" id="NP_001093425.1">
    <property type="nucleotide sequence ID" value="NM_001099955.1"/>
</dbReference>
<dbReference type="SMR" id="P17290"/>
<dbReference type="FunCoup" id="P17290">
    <property type="interactions" value="28"/>
</dbReference>
<dbReference type="STRING" id="9986.ENSOCUP00000048464"/>
<dbReference type="iPTMnet" id="P17290"/>
<dbReference type="GeneID" id="100009100"/>
<dbReference type="KEGG" id="ocu:100009100"/>
<dbReference type="CTD" id="7166"/>
<dbReference type="InParanoid" id="P17290"/>
<dbReference type="OrthoDB" id="983542at2759"/>
<dbReference type="SABIO-RK" id="P17290"/>
<dbReference type="UniPathway" id="UPA00846">
    <property type="reaction ID" value="UER00799"/>
</dbReference>
<dbReference type="Proteomes" id="UP000001811">
    <property type="component" value="Unplaced"/>
</dbReference>
<dbReference type="GO" id="GO:0043005">
    <property type="term" value="C:neuron projection"/>
    <property type="evidence" value="ECO:0007669"/>
    <property type="project" value="TreeGrafter"/>
</dbReference>
<dbReference type="GO" id="GO:0005506">
    <property type="term" value="F:iron ion binding"/>
    <property type="evidence" value="ECO:0007669"/>
    <property type="project" value="InterPro"/>
</dbReference>
<dbReference type="GO" id="GO:0004510">
    <property type="term" value="F:tryptophan 5-monooxygenase activity"/>
    <property type="evidence" value="ECO:0007669"/>
    <property type="project" value="UniProtKB-EC"/>
</dbReference>
<dbReference type="GO" id="GO:0009072">
    <property type="term" value="P:aromatic amino acid metabolic process"/>
    <property type="evidence" value="ECO:0007669"/>
    <property type="project" value="InterPro"/>
</dbReference>
<dbReference type="GO" id="GO:0002576">
    <property type="term" value="P:platelet degranulation"/>
    <property type="evidence" value="ECO:0000250"/>
    <property type="project" value="UniProtKB"/>
</dbReference>
<dbReference type="GO" id="GO:1900046">
    <property type="term" value="P:regulation of hemostasis"/>
    <property type="evidence" value="ECO:0000250"/>
    <property type="project" value="UniProtKB"/>
</dbReference>
<dbReference type="GO" id="GO:0042427">
    <property type="term" value="P:serotonin biosynthetic process"/>
    <property type="evidence" value="ECO:0000250"/>
    <property type="project" value="UniProtKB"/>
</dbReference>
<dbReference type="CDD" id="cd04929">
    <property type="entry name" value="ACT_TPH"/>
    <property type="match status" value="1"/>
</dbReference>
<dbReference type="CDD" id="cd03346">
    <property type="entry name" value="eu_TrpOH"/>
    <property type="match status" value="1"/>
</dbReference>
<dbReference type="FunFam" id="1.10.800.10:FF:000001">
    <property type="entry name" value="tryptophan 5-hydroxylase 1"/>
    <property type="match status" value="1"/>
</dbReference>
<dbReference type="Gene3D" id="1.10.800.10">
    <property type="entry name" value="Aromatic amino acid hydroxylase"/>
    <property type="match status" value="1"/>
</dbReference>
<dbReference type="InterPro" id="IPR045865">
    <property type="entry name" value="ACT-like_dom_sf"/>
</dbReference>
<dbReference type="InterPro" id="IPR002912">
    <property type="entry name" value="ACT_dom"/>
</dbReference>
<dbReference type="InterPro" id="IPR001273">
    <property type="entry name" value="ArAA_hydroxylase"/>
</dbReference>
<dbReference type="InterPro" id="IPR018301">
    <property type="entry name" value="ArAA_hydroxylase_Fe/CU_BS"/>
</dbReference>
<dbReference type="InterPro" id="IPR036951">
    <property type="entry name" value="ArAA_hydroxylase_sf"/>
</dbReference>
<dbReference type="InterPro" id="IPR036329">
    <property type="entry name" value="Aro-AA_hydroxylase_C_sf"/>
</dbReference>
<dbReference type="InterPro" id="IPR019774">
    <property type="entry name" value="Aromatic-AA_hydroxylase_C"/>
</dbReference>
<dbReference type="InterPro" id="IPR005963">
    <property type="entry name" value="Trp_5_mOase"/>
</dbReference>
<dbReference type="InterPro" id="IPR041904">
    <property type="entry name" value="TrpOH_cat"/>
</dbReference>
<dbReference type="InterPro" id="IPR019773">
    <property type="entry name" value="Tyrosine_3-monooxygenase-like"/>
</dbReference>
<dbReference type="NCBIfam" id="TIGR01270">
    <property type="entry name" value="Trp_5_monoox"/>
    <property type="match status" value="1"/>
</dbReference>
<dbReference type="PANTHER" id="PTHR11473">
    <property type="entry name" value="AROMATIC AMINO ACID HYDROXYLASE"/>
    <property type="match status" value="1"/>
</dbReference>
<dbReference type="PANTHER" id="PTHR11473:SF23">
    <property type="entry name" value="TRYPTOPHAN 5-HYDROXYLASE 1"/>
    <property type="match status" value="1"/>
</dbReference>
<dbReference type="Pfam" id="PF01842">
    <property type="entry name" value="ACT"/>
    <property type="match status" value="1"/>
</dbReference>
<dbReference type="Pfam" id="PF00351">
    <property type="entry name" value="Biopterin_H"/>
    <property type="match status" value="1"/>
</dbReference>
<dbReference type="PIRSF" id="PIRSF000336">
    <property type="entry name" value="TH"/>
    <property type="match status" value="1"/>
</dbReference>
<dbReference type="PRINTS" id="PR00372">
    <property type="entry name" value="FYWHYDRXLASE"/>
</dbReference>
<dbReference type="SUPFAM" id="SSF55021">
    <property type="entry name" value="ACT-like"/>
    <property type="match status" value="1"/>
</dbReference>
<dbReference type="SUPFAM" id="SSF56534">
    <property type="entry name" value="Aromatic aminoacid monoxygenases, catalytic and oligomerization domains"/>
    <property type="match status" value="1"/>
</dbReference>
<dbReference type="PROSITE" id="PS51671">
    <property type="entry name" value="ACT"/>
    <property type="match status" value="1"/>
</dbReference>
<dbReference type="PROSITE" id="PS00367">
    <property type="entry name" value="BH4_AAA_HYDROXYL_1"/>
    <property type="match status" value="1"/>
</dbReference>
<dbReference type="PROSITE" id="PS51410">
    <property type="entry name" value="BH4_AAA_HYDROXYL_2"/>
    <property type="match status" value="1"/>
</dbReference>
<accession>P17290</accession>
<accession>Q29523</accession>
<gene>
    <name type="primary">TPH1</name>
    <name type="synonym">TPH</name>
</gene>
<name>TPH1_RABIT</name>